<feature type="chain" id="PRO_0000160704" description="Alcohol dehydrogenase 1">
    <location>
        <begin position="1" status="less than"/>
        <end position="293" status="greater than"/>
    </location>
</feature>
<feature type="binding site" evidence="2">
    <location>
        <position position="26"/>
    </location>
    <ligand>
        <name>Zn(2+)</name>
        <dbReference type="ChEBI" id="CHEBI:29105"/>
        <label>2</label>
    </ligand>
</feature>
<feature type="binding site" evidence="2">
    <location>
        <position position="29"/>
    </location>
    <ligand>
        <name>Zn(2+)</name>
        <dbReference type="ChEBI" id="CHEBI:29105"/>
        <label>2</label>
    </ligand>
</feature>
<feature type="binding site" evidence="2">
    <location>
        <position position="32"/>
    </location>
    <ligand>
        <name>Zn(2+)</name>
        <dbReference type="ChEBI" id="CHEBI:29105"/>
        <label>2</label>
    </ligand>
</feature>
<feature type="binding site" evidence="2">
    <location>
        <position position="40"/>
    </location>
    <ligand>
        <name>Zn(2+)</name>
        <dbReference type="ChEBI" id="CHEBI:29105"/>
        <label>2</label>
    </ligand>
</feature>
<feature type="binding site" evidence="2">
    <location>
        <position position="104"/>
    </location>
    <ligand>
        <name>Zn(2+)</name>
        <dbReference type="ChEBI" id="CHEBI:29105"/>
        <label>1</label>
        <note>catalytic</note>
    </ligand>
</feature>
<feature type="binding site" evidence="2">
    <location>
        <begin position="129"/>
        <end position="134"/>
    </location>
    <ligand>
        <name>NAD(+)</name>
        <dbReference type="ChEBI" id="CHEBI:57540"/>
    </ligand>
</feature>
<feature type="binding site" evidence="2">
    <location>
        <position position="153"/>
    </location>
    <ligand>
        <name>NAD(+)</name>
        <dbReference type="ChEBI" id="CHEBI:57540"/>
    </ligand>
</feature>
<feature type="binding site" evidence="2">
    <location>
        <position position="158"/>
    </location>
    <ligand>
        <name>NAD(+)</name>
        <dbReference type="ChEBI" id="CHEBI:57540"/>
    </ligand>
</feature>
<feature type="binding site" evidence="2">
    <location>
        <position position="199"/>
    </location>
    <ligand>
        <name>NAD(+)</name>
        <dbReference type="ChEBI" id="CHEBI:57540"/>
    </ligand>
</feature>
<feature type="binding site" evidence="1">
    <location>
        <begin position="222"/>
        <end position="224"/>
    </location>
    <ligand>
        <name>NAD(+)</name>
        <dbReference type="ChEBI" id="CHEBI:57540"/>
    </ligand>
</feature>
<feature type="binding site" evidence="2">
    <location>
        <position position="222"/>
    </location>
    <ligand>
        <name>NAD(+)</name>
        <dbReference type="ChEBI" id="CHEBI:57540"/>
    </ligand>
</feature>
<feature type="binding site" evidence="2">
    <location>
        <position position="249"/>
    </location>
    <ligand>
        <name>NAD(+)</name>
        <dbReference type="ChEBI" id="CHEBI:57540"/>
    </ligand>
</feature>
<feature type="non-terminal residue">
    <location>
        <position position="1"/>
    </location>
</feature>
<feature type="non-terminal residue">
    <location>
        <position position="293"/>
    </location>
</feature>
<organism>
    <name type="scientific">Zea luxurians</name>
    <name type="common">Guatemalan teosinte</name>
    <name type="synonym">Euchlaena luxurians</name>
    <dbReference type="NCBI Taxonomy" id="15945"/>
    <lineage>
        <taxon>Eukaryota</taxon>
        <taxon>Viridiplantae</taxon>
        <taxon>Streptophyta</taxon>
        <taxon>Embryophyta</taxon>
        <taxon>Tracheophyta</taxon>
        <taxon>Spermatophyta</taxon>
        <taxon>Magnoliopsida</taxon>
        <taxon>Liliopsida</taxon>
        <taxon>Poales</taxon>
        <taxon>Poaceae</taxon>
        <taxon>PACMAD clade</taxon>
        <taxon>Panicoideae</taxon>
        <taxon>Andropogonodae</taxon>
        <taxon>Andropogoneae</taxon>
        <taxon>Tripsacinae</taxon>
        <taxon>Zea</taxon>
    </lineage>
</organism>
<evidence type="ECO:0000250" key="1">
    <source>
        <dbReference type="UniProtKB" id="P00327"/>
    </source>
</evidence>
<evidence type="ECO:0000250" key="2">
    <source>
        <dbReference type="UniProtKB" id="P06525"/>
    </source>
</evidence>
<evidence type="ECO:0000305" key="3"/>
<proteinExistence type="inferred from homology"/>
<protein>
    <recommendedName>
        <fullName>Alcohol dehydrogenase 1</fullName>
        <ecNumber evidence="2">1.1.1.1</ecNumber>
    </recommendedName>
</protein>
<accession>Q07264</accession>
<dbReference type="EC" id="1.1.1.1" evidence="2"/>
<dbReference type="EMBL" id="L08588">
    <property type="protein sequence ID" value="AAA74639.1"/>
    <property type="molecule type" value="Genomic_DNA"/>
</dbReference>
<dbReference type="EMBL" id="L08590">
    <property type="protein sequence ID" value="AAA74641.1"/>
    <property type="molecule type" value="Genomic_DNA"/>
</dbReference>
<dbReference type="SMR" id="Q07264"/>
<dbReference type="GO" id="GO:0005829">
    <property type="term" value="C:cytosol"/>
    <property type="evidence" value="ECO:0007669"/>
    <property type="project" value="TreeGrafter"/>
</dbReference>
<dbReference type="GO" id="GO:0004022">
    <property type="term" value="F:alcohol dehydrogenase (NAD+) activity"/>
    <property type="evidence" value="ECO:0007669"/>
    <property type="project" value="UniProtKB-EC"/>
</dbReference>
<dbReference type="GO" id="GO:0051903">
    <property type="term" value="F:S-(hydroxymethyl)glutathione dehydrogenase [NAD(P)+] activity"/>
    <property type="evidence" value="ECO:0007669"/>
    <property type="project" value="TreeGrafter"/>
</dbReference>
<dbReference type="GO" id="GO:0008270">
    <property type="term" value="F:zinc ion binding"/>
    <property type="evidence" value="ECO:0007669"/>
    <property type="project" value="TreeGrafter"/>
</dbReference>
<dbReference type="GO" id="GO:0046294">
    <property type="term" value="P:formaldehyde catabolic process"/>
    <property type="evidence" value="ECO:0007669"/>
    <property type="project" value="TreeGrafter"/>
</dbReference>
<dbReference type="FunFam" id="3.90.180.10:FF:000067">
    <property type="entry name" value="alcohol dehydrogenase 1-like isoform X1"/>
    <property type="match status" value="1"/>
</dbReference>
<dbReference type="FunFam" id="3.40.50.720:FF:001292">
    <property type="entry name" value="Alcohol dehydrogenase class-P"/>
    <property type="match status" value="1"/>
</dbReference>
<dbReference type="Gene3D" id="3.90.180.10">
    <property type="entry name" value="Medium-chain alcohol dehydrogenases, catalytic domain"/>
    <property type="match status" value="1"/>
</dbReference>
<dbReference type="Gene3D" id="3.40.50.720">
    <property type="entry name" value="NAD(P)-binding Rossmann-like Domain"/>
    <property type="match status" value="1"/>
</dbReference>
<dbReference type="InterPro" id="IPR013149">
    <property type="entry name" value="ADH-like_C"/>
</dbReference>
<dbReference type="InterPro" id="IPR013154">
    <property type="entry name" value="ADH-like_N"/>
</dbReference>
<dbReference type="InterPro" id="IPR011032">
    <property type="entry name" value="GroES-like_sf"/>
</dbReference>
<dbReference type="InterPro" id="IPR036291">
    <property type="entry name" value="NAD(P)-bd_dom_sf"/>
</dbReference>
<dbReference type="PANTHER" id="PTHR43880">
    <property type="entry name" value="ALCOHOL DEHYDROGENASE"/>
    <property type="match status" value="1"/>
</dbReference>
<dbReference type="PANTHER" id="PTHR43880:SF9">
    <property type="entry name" value="ALCOHOL DEHYDROGENASE 1"/>
    <property type="match status" value="1"/>
</dbReference>
<dbReference type="Pfam" id="PF08240">
    <property type="entry name" value="ADH_N"/>
    <property type="match status" value="1"/>
</dbReference>
<dbReference type="Pfam" id="PF00107">
    <property type="entry name" value="ADH_zinc_N"/>
    <property type="match status" value="1"/>
</dbReference>
<dbReference type="SUPFAM" id="SSF50129">
    <property type="entry name" value="GroES-like"/>
    <property type="match status" value="1"/>
</dbReference>
<dbReference type="SUPFAM" id="SSF51735">
    <property type="entry name" value="NAD(P)-binding Rossmann-fold domains"/>
    <property type="match status" value="1"/>
</dbReference>
<reference key="1">
    <citation type="journal article" date="1993" name="Proc. Natl. Acad. Sci. U.S.A.">
        <title>Molecular evolution of the Adh1 locus in the genus Zea.</title>
        <authorList>
            <person name="Gaut B.S."/>
            <person name="Clegg M.T."/>
        </authorList>
    </citation>
    <scope>NUCLEOTIDE SEQUENCE [GENOMIC DNA]</scope>
</reference>
<comment type="catalytic activity">
    <reaction evidence="2">
        <text>a primary alcohol + NAD(+) = an aldehyde + NADH + H(+)</text>
        <dbReference type="Rhea" id="RHEA:10736"/>
        <dbReference type="ChEBI" id="CHEBI:15378"/>
        <dbReference type="ChEBI" id="CHEBI:15734"/>
        <dbReference type="ChEBI" id="CHEBI:17478"/>
        <dbReference type="ChEBI" id="CHEBI:57540"/>
        <dbReference type="ChEBI" id="CHEBI:57945"/>
        <dbReference type="EC" id="1.1.1.1"/>
    </reaction>
</comment>
<comment type="catalytic activity">
    <reaction evidence="2">
        <text>a secondary alcohol + NAD(+) = a ketone + NADH + H(+)</text>
        <dbReference type="Rhea" id="RHEA:10740"/>
        <dbReference type="ChEBI" id="CHEBI:15378"/>
        <dbReference type="ChEBI" id="CHEBI:17087"/>
        <dbReference type="ChEBI" id="CHEBI:35681"/>
        <dbReference type="ChEBI" id="CHEBI:57540"/>
        <dbReference type="ChEBI" id="CHEBI:57945"/>
        <dbReference type="EC" id="1.1.1.1"/>
    </reaction>
</comment>
<comment type="cofactor">
    <cofactor evidence="2">
        <name>Zn(2+)</name>
        <dbReference type="ChEBI" id="CHEBI:29105"/>
    </cofactor>
    <text evidence="2">Binds 2 Zn(2+) ions per subunit.</text>
</comment>
<comment type="subunit">
    <text evidence="2">Homodimer.</text>
</comment>
<comment type="subcellular location">
    <subcellularLocation>
        <location evidence="2">Cytoplasm</location>
    </subcellularLocation>
</comment>
<comment type="similarity">
    <text evidence="3">Belongs to the zinc-containing alcohol dehydrogenase family.</text>
</comment>
<keyword id="KW-0963">Cytoplasm</keyword>
<keyword id="KW-0479">Metal-binding</keyword>
<keyword id="KW-0520">NAD</keyword>
<keyword id="KW-0560">Oxidoreductase</keyword>
<keyword id="KW-0862">Zinc</keyword>
<name>ADH1_ZEALU</name>
<sequence>IIESVGEGVTDVAPGDHVLPVFTGECKECAHCKSAESNMCDLLRINTDRGVMIGDGKSRFSINGKPIYHFVGTSTFSEYTVMHVGCVAKINPQAPLDKVCVLSCGISTGLGASINVAKPPKGSTVAVFGLGAVGLAAAEGARIAGASRIIGVDLNPSRFEEARKFGCTEFVNPKDHNKPVQEVLAEMTNGGVDRSVECTGNINAMIQAFECVHDGWGVAVLVGVPHKDAEFKTHPMNFLNERTLKGTFFGNYKPRTDLPNVVELYMKKELEVEKFITHSVPFAEINKAFDLMA</sequence>
<gene>
    <name type="primary">ADH1</name>
</gene>